<feature type="chain" id="PRO_1000051937" description="Large ribosomal subunit protein uL2">
    <location>
        <begin position="1"/>
        <end position="273"/>
    </location>
</feature>
<feature type="region of interest" description="Disordered" evidence="2">
    <location>
        <begin position="28"/>
        <end position="53"/>
    </location>
</feature>
<feature type="region of interest" description="Disordered" evidence="2">
    <location>
        <begin position="221"/>
        <end position="273"/>
    </location>
</feature>
<feature type="compositionally biased region" description="Low complexity" evidence="2">
    <location>
        <begin position="39"/>
        <end position="48"/>
    </location>
</feature>
<name>RL2_KLEP7</name>
<evidence type="ECO:0000255" key="1">
    <source>
        <dbReference type="HAMAP-Rule" id="MF_01320"/>
    </source>
</evidence>
<evidence type="ECO:0000256" key="2">
    <source>
        <dbReference type="SAM" id="MobiDB-lite"/>
    </source>
</evidence>
<evidence type="ECO:0000305" key="3"/>
<comment type="function">
    <text evidence="1">One of the primary rRNA binding proteins. Required for association of the 30S and 50S subunits to form the 70S ribosome, for tRNA binding and peptide bond formation. It has been suggested to have peptidyltransferase activity; this is somewhat controversial. Makes several contacts with the 16S rRNA in the 70S ribosome.</text>
</comment>
<comment type="subunit">
    <text evidence="1">Part of the 50S ribosomal subunit. Forms a bridge to the 30S subunit in the 70S ribosome.</text>
</comment>
<comment type="similarity">
    <text evidence="1">Belongs to the universal ribosomal protein uL2 family.</text>
</comment>
<keyword id="KW-0687">Ribonucleoprotein</keyword>
<keyword id="KW-0689">Ribosomal protein</keyword>
<keyword id="KW-0694">RNA-binding</keyword>
<keyword id="KW-0699">rRNA-binding</keyword>
<sequence>MAVVKCKPTSPGRRHVVKVVNPELHKGKPFAPLLEKNSKSGGRNNNGRITTRHIGGGHKQAYRIVDFKRNKDGIPAVVERLEYDPNRSANIALVLYKDGERRYILAPKGLKAGDQIQSGVDAAIKAGNTLPMRNIPVGSTVHNVEMKPGKGGQLARSAGTYVQIVARDGAYVTLRLRSGEMRKVEADCRATLGEVGNAEHMLRVLGKAGAARWRGVRPTVRGTAMNPVDHPHGGGEGRNFGKHPVSPWGLQTKGKKTRSNKRTDKFIVRRRSK</sequence>
<proteinExistence type="inferred from homology"/>
<reference key="1">
    <citation type="submission" date="2006-09" db="EMBL/GenBank/DDBJ databases">
        <authorList>
            <consortium name="The Klebsiella pneumonia Genome Sequencing Project"/>
            <person name="McClelland M."/>
            <person name="Sanderson E.K."/>
            <person name="Spieth J."/>
            <person name="Clifton W.S."/>
            <person name="Latreille P."/>
            <person name="Sabo A."/>
            <person name="Pepin K."/>
            <person name="Bhonagiri V."/>
            <person name="Porwollik S."/>
            <person name="Ali J."/>
            <person name="Wilson R.K."/>
        </authorList>
    </citation>
    <scope>NUCLEOTIDE SEQUENCE [LARGE SCALE GENOMIC DNA]</scope>
    <source>
        <strain>ATCC 700721 / MGH 78578</strain>
    </source>
</reference>
<protein>
    <recommendedName>
        <fullName evidence="1">Large ribosomal subunit protein uL2</fullName>
    </recommendedName>
    <alternativeName>
        <fullName evidence="3">50S ribosomal protein L2</fullName>
    </alternativeName>
</protein>
<accession>A6TEW9</accession>
<organism>
    <name type="scientific">Klebsiella pneumoniae subsp. pneumoniae (strain ATCC 700721 / MGH 78578)</name>
    <dbReference type="NCBI Taxonomy" id="272620"/>
    <lineage>
        <taxon>Bacteria</taxon>
        <taxon>Pseudomonadati</taxon>
        <taxon>Pseudomonadota</taxon>
        <taxon>Gammaproteobacteria</taxon>
        <taxon>Enterobacterales</taxon>
        <taxon>Enterobacteriaceae</taxon>
        <taxon>Klebsiella/Raoultella group</taxon>
        <taxon>Klebsiella</taxon>
        <taxon>Klebsiella pneumoniae complex</taxon>
    </lineage>
</organism>
<gene>
    <name evidence="1" type="primary">rplB</name>
    <name type="ordered locus">KPN78578_36790</name>
    <name type="ORF">KPN_03716</name>
</gene>
<dbReference type="EMBL" id="CP000647">
    <property type="protein sequence ID" value="ABR79103.1"/>
    <property type="molecule type" value="Genomic_DNA"/>
</dbReference>
<dbReference type="RefSeq" id="WP_002919786.1">
    <property type="nucleotide sequence ID" value="NC_009648.1"/>
</dbReference>
<dbReference type="SMR" id="A6TEW9"/>
<dbReference type="STRING" id="272620.KPN_03716"/>
<dbReference type="jPOST" id="A6TEW9"/>
<dbReference type="PaxDb" id="272620-KPN_03716"/>
<dbReference type="EnsemblBacteria" id="ABR79103">
    <property type="protein sequence ID" value="ABR79103"/>
    <property type="gene ID" value="KPN_03716"/>
</dbReference>
<dbReference type="GeneID" id="93751935"/>
<dbReference type="KEGG" id="kpn:KPN_03716"/>
<dbReference type="HOGENOM" id="CLU_036235_2_1_6"/>
<dbReference type="Proteomes" id="UP000000265">
    <property type="component" value="Chromosome"/>
</dbReference>
<dbReference type="GO" id="GO:0005829">
    <property type="term" value="C:cytosol"/>
    <property type="evidence" value="ECO:0007669"/>
    <property type="project" value="UniProtKB-ARBA"/>
</dbReference>
<dbReference type="GO" id="GO:0015934">
    <property type="term" value="C:large ribosomal subunit"/>
    <property type="evidence" value="ECO:0007669"/>
    <property type="project" value="InterPro"/>
</dbReference>
<dbReference type="GO" id="GO:0019843">
    <property type="term" value="F:rRNA binding"/>
    <property type="evidence" value="ECO:0007669"/>
    <property type="project" value="UniProtKB-UniRule"/>
</dbReference>
<dbReference type="GO" id="GO:0003735">
    <property type="term" value="F:structural constituent of ribosome"/>
    <property type="evidence" value="ECO:0007669"/>
    <property type="project" value="InterPro"/>
</dbReference>
<dbReference type="GO" id="GO:0016740">
    <property type="term" value="F:transferase activity"/>
    <property type="evidence" value="ECO:0007669"/>
    <property type="project" value="InterPro"/>
</dbReference>
<dbReference type="GO" id="GO:0002181">
    <property type="term" value="P:cytoplasmic translation"/>
    <property type="evidence" value="ECO:0007669"/>
    <property type="project" value="TreeGrafter"/>
</dbReference>
<dbReference type="FunFam" id="2.30.30.30:FF:000001">
    <property type="entry name" value="50S ribosomal protein L2"/>
    <property type="match status" value="1"/>
</dbReference>
<dbReference type="FunFam" id="2.40.50.140:FF:000003">
    <property type="entry name" value="50S ribosomal protein L2"/>
    <property type="match status" value="1"/>
</dbReference>
<dbReference type="FunFam" id="4.10.950.10:FF:000001">
    <property type="entry name" value="50S ribosomal protein L2"/>
    <property type="match status" value="1"/>
</dbReference>
<dbReference type="Gene3D" id="2.30.30.30">
    <property type="match status" value="1"/>
</dbReference>
<dbReference type="Gene3D" id="2.40.50.140">
    <property type="entry name" value="Nucleic acid-binding proteins"/>
    <property type="match status" value="1"/>
</dbReference>
<dbReference type="Gene3D" id="4.10.950.10">
    <property type="entry name" value="Ribosomal protein L2, domain 3"/>
    <property type="match status" value="1"/>
</dbReference>
<dbReference type="HAMAP" id="MF_01320_B">
    <property type="entry name" value="Ribosomal_uL2_B"/>
    <property type="match status" value="1"/>
</dbReference>
<dbReference type="InterPro" id="IPR012340">
    <property type="entry name" value="NA-bd_OB-fold"/>
</dbReference>
<dbReference type="InterPro" id="IPR014722">
    <property type="entry name" value="Rib_uL2_dom2"/>
</dbReference>
<dbReference type="InterPro" id="IPR002171">
    <property type="entry name" value="Ribosomal_uL2"/>
</dbReference>
<dbReference type="InterPro" id="IPR005880">
    <property type="entry name" value="Ribosomal_uL2_bac/org-type"/>
</dbReference>
<dbReference type="InterPro" id="IPR022669">
    <property type="entry name" value="Ribosomal_uL2_C"/>
</dbReference>
<dbReference type="InterPro" id="IPR022671">
    <property type="entry name" value="Ribosomal_uL2_CS"/>
</dbReference>
<dbReference type="InterPro" id="IPR014726">
    <property type="entry name" value="Ribosomal_uL2_dom3"/>
</dbReference>
<dbReference type="InterPro" id="IPR022666">
    <property type="entry name" value="Ribosomal_uL2_RNA-bd_dom"/>
</dbReference>
<dbReference type="InterPro" id="IPR008991">
    <property type="entry name" value="Translation_prot_SH3-like_sf"/>
</dbReference>
<dbReference type="NCBIfam" id="TIGR01171">
    <property type="entry name" value="rplB_bact"/>
    <property type="match status" value="1"/>
</dbReference>
<dbReference type="PANTHER" id="PTHR13691:SF5">
    <property type="entry name" value="LARGE RIBOSOMAL SUBUNIT PROTEIN UL2M"/>
    <property type="match status" value="1"/>
</dbReference>
<dbReference type="PANTHER" id="PTHR13691">
    <property type="entry name" value="RIBOSOMAL PROTEIN L2"/>
    <property type="match status" value="1"/>
</dbReference>
<dbReference type="Pfam" id="PF00181">
    <property type="entry name" value="Ribosomal_L2"/>
    <property type="match status" value="1"/>
</dbReference>
<dbReference type="Pfam" id="PF03947">
    <property type="entry name" value="Ribosomal_L2_C"/>
    <property type="match status" value="1"/>
</dbReference>
<dbReference type="PIRSF" id="PIRSF002158">
    <property type="entry name" value="Ribosomal_L2"/>
    <property type="match status" value="1"/>
</dbReference>
<dbReference type="SMART" id="SM01383">
    <property type="entry name" value="Ribosomal_L2"/>
    <property type="match status" value="1"/>
</dbReference>
<dbReference type="SMART" id="SM01382">
    <property type="entry name" value="Ribosomal_L2_C"/>
    <property type="match status" value="1"/>
</dbReference>
<dbReference type="SUPFAM" id="SSF50249">
    <property type="entry name" value="Nucleic acid-binding proteins"/>
    <property type="match status" value="1"/>
</dbReference>
<dbReference type="SUPFAM" id="SSF50104">
    <property type="entry name" value="Translation proteins SH3-like domain"/>
    <property type="match status" value="1"/>
</dbReference>
<dbReference type="PROSITE" id="PS00467">
    <property type="entry name" value="RIBOSOMAL_L2"/>
    <property type="match status" value="1"/>
</dbReference>